<protein>
    <recommendedName>
        <fullName>DNA replication licensing factor MCM5</fullName>
        <ecNumber>3.6.4.12</ecNumber>
    </recommendedName>
    <alternativeName>
        <fullName>Minichromosome maintenance protein 5</fullName>
    </alternativeName>
</protein>
<feature type="chain" id="PRO_0000425995" description="DNA replication licensing factor MCM5">
    <location>
        <begin position="1"/>
        <end position="729"/>
    </location>
</feature>
<feature type="domain" description="MCM">
    <location>
        <begin position="326"/>
        <end position="532"/>
    </location>
</feature>
<feature type="short sequence motif" description="Arginine finger">
    <location>
        <begin position="508"/>
        <end position="511"/>
    </location>
</feature>
<feature type="binding site" evidence="1">
    <location>
        <begin position="376"/>
        <end position="383"/>
    </location>
    <ligand>
        <name>ATP</name>
        <dbReference type="ChEBI" id="CHEBI:30616"/>
    </ligand>
</feature>
<accession>B8AEH3</accession>
<dbReference type="EC" id="3.6.4.12"/>
<dbReference type="EMBL" id="CM000127">
    <property type="protein sequence ID" value="EEC74176.1"/>
    <property type="molecule type" value="Genomic_DNA"/>
</dbReference>
<dbReference type="SMR" id="B8AEH3"/>
<dbReference type="STRING" id="39946.B8AEH3"/>
<dbReference type="EnsemblPlants" id="BGIOSGA005432-TA">
    <property type="protein sequence ID" value="BGIOSGA005432-PA"/>
    <property type="gene ID" value="BGIOSGA005432"/>
</dbReference>
<dbReference type="Gramene" id="BGIOSGA005432-TA">
    <property type="protein sequence ID" value="BGIOSGA005432-PA"/>
    <property type="gene ID" value="BGIOSGA005432"/>
</dbReference>
<dbReference type="HOGENOM" id="CLU_000995_7_2_1"/>
<dbReference type="OMA" id="ITYCKTR"/>
<dbReference type="OrthoDB" id="10036721at2759"/>
<dbReference type="Proteomes" id="UP000007015">
    <property type="component" value="Chromosome 2"/>
</dbReference>
<dbReference type="GO" id="GO:0042555">
    <property type="term" value="C:MCM complex"/>
    <property type="evidence" value="ECO:0007669"/>
    <property type="project" value="InterPro"/>
</dbReference>
<dbReference type="GO" id="GO:0005634">
    <property type="term" value="C:nucleus"/>
    <property type="evidence" value="ECO:0007669"/>
    <property type="project" value="UniProtKB-SubCell"/>
</dbReference>
<dbReference type="GO" id="GO:0043138">
    <property type="term" value="F:3'-5' DNA helicase activity"/>
    <property type="evidence" value="ECO:0007669"/>
    <property type="project" value="TreeGrafter"/>
</dbReference>
<dbReference type="GO" id="GO:0005524">
    <property type="term" value="F:ATP binding"/>
    <property type="evidence" value="ECO:0007669"/>
    <property type="project" value="UniProtKB-KW"/>
</dbReference>
<dbReference type="GO" id="GO:0016887">
    <property type="term" value="F:ATP hydrolysis activity"/>
    <property type="evidence" value="ECO:0007669"/>
    <property type="project" value="RHEA"/>
</dbReference>
<dbReference type="GO" id="GO:0003688">
    <property type="term" value="F:DNA replication origin binding"/>
    <property type="evidence" value="ECO:0007669"/>
    <property type="project" value="InterPro"/>
</dbReference>
<dbReference type="GO" id="GO:0003697">
    <property type="term" value="F:single-stranded DNA binding"/>
    <property type="evidence" value="ECO:0007669"/>
    <property type="project" value="TreeGrafter"/>
</dbReference>
<dbReference type="GO" id="GO:0017116">
    <property type="term" value="F:single-stranded DNA helicase activity"/>
    <property type="evidence" value="ECO:0007669"/>
    <property type="project" value="TreeGrafter"/>
</dbReference>
<dbReference type="GO" id="GO:0006270">
    <property type="term" value="P:DNA replication initiation"/>
    <property type="evidence" value="ECO:0007669"/>
    <property type="project" value="InterPro"/>
</dbReference>
<dbReference type="GO" id="GO:0000727">
    <property type="term" value="P:double-strand break repair via break-induced replication"/>
    <property type="evidence" value="ECO:0007669"/>
    <property type="project" value="TreeGrafter"/>
</dbReference>
<dbReference type="CDD" id="cd17756">
    <property type="entry name" value="MCM5"/>
    <property type="match status" value="1"/>
</dbReference>
<dbReference type="FunFam" id="2.20.28.10:FF:000005">
    <property type="entry name" value="DNA helicase"/>
    <property type="match status" value="1"/>
</dbReference>
<dbReference type="FunFam" id="3.30.1640.10:FF:000016">
    <property type="entry name" value="DNA helicase"/>
    <property type="match status" value="1"/>
</dbReference>
<dbReference type="FunFam" id="3.40.50.300:FF:000929">
    <property type="entry name" value="DNA helicase"/>
    <property type="match status" value="1"/>
</dbReference>
<dbReference type="Gene3D" id="2.20.28.10">
    <property type="match status" value="1"/>
</dbReference>
<dbReference type="Gene3D" id="3.30.1640.10">
    <property type="entry name" value="mini-chromosome maintenance (MCM) complex, chain A, domain 1"/>
    <property type="match status" value="1"/>
</dbReference>
<dbReference type="Gene3D" id="2.40.50.140">
    <property type="entry name" value="Nucleic acid-binding proteins"/>
    <property type="match status" value="1"/>
</dbReference>
<dbReference type="Gene3D" id="3.40.50.300">
    <property type="entry name" value="P-loop containing nucleotide triphosphate hydrolases"/>
    <property type="match status" value="1"/>
</dbReference>
<dbReference type="InterPro" id="IPR031327">
    <property type="entry name" value="MCM"/>
</dbReference>
<dbReference type="InterPro" id="IPR008048">
    <property type="entry name" value="MCM5"/>
</dbReference>
<dbReference type="InterPro" id="IPR054125">
    <property type="entry name" value="MCM5_C"/>
</dbReference>
<dbReference type="InterPro" id="IPR018525">
    <property type="entry name" value="MCM_CS"/>
</dbReference>
<dbReference type="InterPro" id="IPR001208">
    <property type="entry name" value="MCM_dom"/>
</dbReference>
<dbReference type="InterPro" id="IPR041562">
    <property type="entry name" value="MCM_lid"/>
</dbReference>
<dbReference type="InterPro" id="IPR027925">
    <property type="entry name" value="MCM_N"/>
</dbReference>
<dbReference type="InterPro" id="IPR033762">
    <property type="entry name" value="MCM_OB"/>
</dbReference>
<dbReference type="InterPro" id="IPR012340">
    <property type="entry name" value="NA-bd_OB-fold"/>
</dbReference>
<dbReference type="InterPro" id="IPR027417">
    <property type="entry name" value="P-loop_NTPase"/>
</dbReference>
<dbReference type="PANTHER" id="PTHR11630">
    <property type="entry name" value="DNA REPLICATION LICENSING FACTOR MCM FAMILY MEMBER"/>
    <property type="match status" value="1"/>
</dbReference>
<dbReference type="PANTHER" id="PTHR11630:SF42">
    <property type="entry name" value="DNA REPLICATION LICENSING FACTOR MCM5"/>
    <property type="match status" value="1"/>
</dbReference>
<dbReference type="Pfam" id="PF00493">
    <property type="entry name" value="MCM"/>
    <property type="match status" value="1"/>
</dbReference>
<dbReference type="Pfam" id="PF21933">
    <property type="entry name" value="MCM5_C"/>
    <property type="match status" value="1"/>
</dbReference>
<dbReference type="Pfam" id="PF17855">
    <property type="entry name" value="MCM_lid"/>
    <property type="match status" value="1"/>
</dbReference>
<dbReference type="Pfam" id="PF14551">
    <property type="entry name" value="MCM_N"/>
    <property type="match status" value="1"/>
</dbReference>
<dbReference type="Pfam" id="PF17207">
    <property type="entry name" value="MCM_OB"/>
    <property type="match status" value="1"/>
</dbReference>
<dbReference type="PRINTS" id="PR01657">
    <property type="entry name" value="MCMFAMILY"/>
</dbReference>
<dbReference type="PRINTS" id="PR01661">
    <property type="entry name" value="MCMPROTEIN5"/>
</dbReference>
<dbReference type="SMART" id="SM00350">
    <property type="entry name" value="MCM"/>
    <property type="match status" value="1"/>
</dbReference>
<dbReference type="SUPFAM" id="SSF50249">
    <property type="entry name" value="Nucleic acid-binding proteins"/>
    <property type="match status" value="1"/>
</dbReference>
<dbReference type="SUPFAM" id="SSF52540">
    <property type="entry name" value="P-loop containing nucleoside triphosphate hydrolases"/>
    <property type="match status" value="1"/>
</dbReference>
<dbReference type="PROSITE" id="PS00847">
    <property type="entry name" value="MCM_1"/>
    <property type="match status" value="1"/>
</dbReference>
<dbReference type="PROSITE" id="PS50051">
    <property type="entry name" value="MCM_2"/>
    <property type="match status" value="1"/>
</dbReference>
<name>MCM5_ORYSI</name>
<gene>
    <name type="primary">MCM5</name>
    <name type="ORF">OsI_09290</name>
</gene>
<organism>
    <name type="scientific">Oryza sativa subsp. indica</name>
    <name type="common">Rice</name>
    <dbReference type="NCBI Taxonomy" id="39946"/>
    <lineage>
        <taxon>Eukaryota</taxon>
        <taxon>Viridiplantae</taxon>
        <taxon>Streptophyta</taxon>
        <taxon>Embryophyta</taxon>
        <taxon>Tracheophyta</taxon>
        <taxon>Spermatophyta</taxon>
        <taxon>Magnoliopsida</taxon>
        <taxon>Liliopsida</taxon>
        <taxon>Poales</taxon>
        <taxon>Poaceae</taxon>
        <taxon>BOP clade</taxon>
        <taxon>Oryzoideae</taxon>
        <taxon>Oryzeae</taxon>
        <taxon>Oryzinae</taxon>
        <taxon>Oryza</taxon>
        <taxon>Oryza sativa</taxon>
    </lineage>
</organism>
<proteinExistence type="inferred from homology"/>
<reference key="1">
    <citation type="journal article" date="2005" name="PLoS Biol.">
        <title>The genomes of Oryza sativa: a history of duplications.</title>
        <authorList>
            <person name="Yu J."/>
            <person name="Wang J."/>
            <person name="Lin W."/>
            <person name="Li S."/>
            <person name="Li H."/>
            <person name="Zhou J."/>
            <person name="Ni P."/>
            <person name="Dong W."/>
            <person name="Hu S."/>
            <person name="Zeng C."/>
            <person name="Zhang J."/>
            <person name="Zhang Y."/>
            <person name="Li R."/>
            <person name="Xu Z."/>
            <person name="Li S."/>
            <person name="Li X."/>
            <person name="Zheng H."/>
            <person name="Cong L."/>
            <person name="Lin L."/>
            <person name="Yin J."/>
            <person name="Geng J."/>
            <person name="Li G."/>
            <person name="Shi J."/>
            <person name="Liu J."/>
            <person name="Lv H."/>
            <person name="Li J."/>
            <person name="Wang J."/>
            <person name="Deng Y."/>
            <person name="Ran L."/>
            <person name="Shi X."/>
            <person name="Wang X."/>
            <person name="Wu Q."/>
            <person name="Li C."/>
            <person name="Ren X."/>
            <person name="Wang J."/>
            <person name="Wang X."/>
            <person name="Li D."/>
            <person name="Liu D."/>
            <person name="Zhang X."/>
            <person name="Ji Z."/>
            <person name="Zhao W."/>
            <person name="Sun Y."/>
            <person name="Zhang Z."/>
            <person name="Bao J."/>
            <person name="Han Y."/>
            <person name="Dong L."/>
            <person name="Ji J."/>
            <person name="Chen P."/>
            <person name="Wu S."/>
            <person name="Liu J."/>
            <person name="Xiao Y."/>
            <person name="Bu D."/>
            <person name="Tan J."/>
            <person name="Yang L."/>
            <person name="Ye C."/>
            <person name="Zhang J."/>
            <person name="Xu J."/>
            <person name="Zhou Y."/>
            <person name="Yu Y."/>
            <person name="Zhang B."/>
            <person name="Zhuang S."/>
            <person name="Wei H."/>
            <person name="Liu B."/>
            <person name="Lei M."/>
            <person name="Yu H."/>
            <person name="Li Y."/>
            <person name="Xu H."/>
            <person name="Wei S."/>
            <person name="He X."/>
            <person name="Fang L."/>
            <person name="Zhang Z."/>
            <person name="Zhang Y."/>
            <person name="Huang X."/>
            <person name="Su Z."/>
            <person name="Tong W."/>
            <person name="Li J."/>
            <person name="Tong Z."/>
            <person name="Li S."/>
            <person name="Ye J."/>
            <person name="Wang L."/>
            <person name="Fang L."/>
            <person name="Lei T."/>
            <person name="Chen C.-S."/>
            <person name="Chen H.-C."/>
            <person name="Xu Z."/>
            <person name="Li H."/>
            <person name="Huang H."/>
            <person name="Zhang F."/>
            <person name="Xu H."/>
            <person name="Li N."/>
            <person name="Zhao C."/>
            <person name="Li S."/>
            <person name="Dong L."/>
            <person name="Huang Y."/>
            <person name="Li L."/>
            <person name="Xi Y."/>
            <person name="Qi Q."/>
            <person name="Li W."/>
            <person name="Zhang B."/>
            <person name="Hu W."/>
            <person name="Zhang Y."/>
            <person name="Tian X."/>
            <person name="Jiao Y."/>
            <person name="Liang X."/>
            <person name="Jin J."/>
            <person name="Gao L."/>
            <person name="Zheng W."/>
            <person name="Hao B."/>
            <person name="Liu S.-M."/>
            <person name="Wang W."/>
            <person name="Yuan L."/>
            <person name="Cao M."/>
            <person name="McDermott J."/>
            <person name="Samudrala R."/>
            <person name="Wang J."/>
            <person name="Wong G.K.-S."/>
            <person name="Yang H."/>
        </authorList>
    </citation>
    <scope>NUCLEOTIDE SEQUENCE [LARGE SCALE GENOMIC DNA]</scope>
    <source>
        <strain>cv. 93-11</strain>
    </source>
</reference>
<comment type="function">
    <text evidence="1">Probable component of the MCM2-7 complex (MCM complex) that may function as a DNA helicase and which is essential to undergo a single round of replication initiation and elongation per cell cycle in eukaryotic cells.</text>
</comment>
<comment type="catalytic activity">
    <reaction>
        <text>ATP + H2O = ADP + phosphate + H(+)</text>
        <dbReference type="Rhea" id="RHEA:13065"/>
        <dbReference type="ChEBI" id="CHEBI:15377"/>
        <dbReference type="ChEBI" id="CHEBI:15378"/>
        <dbReference type="ChEBI" id="CHEBI:30616"/>
        <dbReference type="ChEBI" id="CHEBI:43474"/>
        <dbReference type="ChEBI" id="CHEBI:456216"/>
        <dbReference type="EC" id="3.6.4.12"/>
    </reaction>
</comment>
<comment type="subunit">
    <text evidence="1">Component of the minichromosome maintenance (MCM) complex, a heterotetramer composed of MCM2, MCM3, MCM4, MCM5, MCM6 and MCM7.</text>
</comment>
<comment type="subcellular location">
    <subcellularLocation>
        <location evidence="2">Nucleus</location>
    </subcellularLocation>
</comment>
<comment type="similarity">
    <text evidence="2">Belongs to the MCM family.</text>
</comment>
<keyword id="KW-0067">ATP-binding</keyword>
<keyword id="KW-0131">Cell cycle</keyword>
<keyword id="KW-0235">DNA replication</keyword>
<keyword id="KW-0238">DNA-binding</keyword>
<keyword id="KW-0347">Helicase</keyword>
<keyword id="KW-0378">Hydrolase</keyword>
<keyword id="KW-0547">Nucleotide-binding</keyword>
<keyword id="KW-0539">Nucleus</keyword>
<keyword id="KW-1185">Reference proteome</keyword>
<sequence>MSGWDEGAVFYSDQAQFPRGGPGGDPSADLTRHSALRKFKEFLRGFTGPTGDFPYRESLVHNRDHVTVAIEDLDAFDAELSDKIRKSPADYLPLFETAASEVLASLRSKVAGETGEMEEPASGDVQIFLSSKENCLSMRSIGADYMSKLVKIAGITIAASRVKAKATHVTLLCKNCRSVKTVPCRPGLGGAIVPRSCDHVPQPGEEPCPLDPWIAVPDKSKYVDLQTLKLQENPEDVPTGELPRNMLLSVDRHLVQTIVPGTRLTVIGIYSVYQASANQKGAVGVKQPYIRVVGLEQSRDANSNGPSNFTLDEEMEFKEFAQRPDAYVKICSMIGPSIYGHSDVKKAIACLLFGGSKKRLPDGVRLRGDIHVLLLGDPSTAKSQFLKFVEKTAPIAVYTSGKGSSAAGLTASVIRDGSSREFYLEGGAMVLADGGVVCIDEFDKMRPEDRVAIHEAMEQQTISIAKAGITTVLNSRTSVLAAANPIAGRYDDLKTAQDNIDLQTTILSRFDLIFIVKDVRMYDQDKRIASHIIKVHASGAAASSKNTDASEGENWLKRYIEYCRVTCKPRLSEKAAEMLQNKYVEIRQKMRQQAHETGRAAAIPITVRQLEAIIRLSESLAKMRLTSVATPEHVEEAFRLFNVSTVDAARSGINEHLNLSPDIANEIKQAEAQIKRRMGIGSHISERRLIDELNRMGMNESIVRRALLIMHQRDEVEYKRERHVIVRKA</sequence>
<evidence type="ECO:0000250" key="1"/>
<evidence type="ECO:0000305" key="2"/>